<reference key="1">
    <citation type="journal article" date="1997" name="Nature">
        <title>The complete genome sequence of the hyperthermophilic, sulphate-reducing archaeon Archaeoglobus fulgidus.</title>
        <authorList>
            <person name="Klenk H.-P."/>
            <person name="Clayton R.A."/>
            <person name="Tomb J.-F."/>
            <person name="White O."/>
            <person name="Nelson K.E."/>
            <person name="Ketchum K.A."/>
            <person name="Dodson R.J."/>
            <person name="Gwinn M.L."/>
            <person name="Hickey E.K."/>
            <person name="Peterson J.D."/>
            <person name="Richardson D.L."/>
            <person name="Kerlavage A.R."/>
            <person name="Graham D.E."/>
            <person name="Kyrpides N.C."/>
            <person name="Fleischmann R.D."/>
            <person name="Quackenbush J."/>
            <person name="Lee N.H."/>
            <person name="Sutton G.G."/>
            <person name="Gill S.R."/>
            <person name="Kirkness E.F."/>
            <person name="Dougherty B.A."/>
            <person name="McKenney K."/>
            <person name="Adams M.D."/>
            <person name="Loftus B.J."/>
            <person name="Peterson S.N."/>
            <person name="Reich C.I."/>
            <person name="McNeil L.K."/>
            <person name="Badger J.H."/>
            <person name="Glodek A."/>
            <person name="Zhou L."/>
            <person name="Overbeek R."/>
            <person name="Gocayne J.D."/>
            <person name="Weidman J.F."/>
            <person name="McDonald L.A."/>
            <person name="Utterback T.R."/>
            <person name="Cotton M.D."/>
            <person name="Spriggs T."/>
            <person name="Artiach P."/>
            <person name="Kaine B.P."/>
            <person name="Sykes S.M."/>
            <person name="Sadow P.W."/>
            <person name="D'Andrea K.P."/>
            <person name="Bowman C."/>
            <person name="Fujii C."/>
            <person name="Garland S.A."/>
            <person name="Mason T.M."/>
            <person name="Olsen G.J."/>
            <person name="Fraser C.M."/>
            <person name="Smith H.O."/>
            <person name="Woese C.R."/>
            <person name="Venter J.C."/>
        </authorList>
    </citation>
    <scope>NUCLEOTIDE SEQUENCE [LARGE SCALE GENOMIC DNA]</scope>
    <source>
        <strain>ATCC 49558 / DSM 4304 / JCM 9628 / NBRC 100126 / VC-16</strain>
    </source>
</reference>
<reference key="2">
    <citation type="journal article" date="2003" name="J. Mol. Biol.">
        <title>Investigations on the maturation and regulation of archaebacterial proteasomes.</title>
        <authorList>
            <person name="Groll M."/>
            <person name="Brandstetter H."/>
            <person name="Bartunik H."/>
            <person name="Bourenkow G."/>
            <person name="Huber R."/>
        </authorList>
    </citation>
    <scope>X-RAY CRYSTALLOGRAPHY (2.83 ANGSTROMS) OF 12-213 IN COMPLEX WITH ALPHA SUBUNIT AND CALPAIN-INHIBITOR I</scope>
    <scope>SUBUNIT</scope>
</reference>
<protein>
    <recommendedName>
        <fullName evidence="1">Proteasome subunit beta</fullName>
        <ecNumber evidence="1">3.4.25.1</ecNumber>
    </recommendedName>
    <alternativeName>
        <fullName evidence="1">20S proteasome beta subunit</fullName>
    </alternativeName>
    <alternativeName>
        <fullName evidence="1">Proteasome core protein PsmB</fullName>
    </alternativeName>
</protein>
<evidence type="ECO:0000255" key="1">
    <source>
        <dbReference type="HAMAP-Rule" id="MF_02113"/>
    </source>
</evidence>
<evidence type="ECO:0000269" key="2">
    <source>
    </source>
</evidence>
<evidence type="ECO:0007829" key="3">
    <source>
        <dbReference type="PDB" id="1J2Q"/>
    </source>
</evidence>
<organism>
    <name type="scientific">Archaeoglobus fulgidus (strain ATCC 49558 / DSM 4304 / JCM 9628 / NBRC 100126 / VC-16)</name>
    <dbReference type="NCBI Taxonomy" id="224325"/>
    <lineage>
        <taxon>Archaea</taxon>
        <taxon>Methanobacteriati</taxon>
        <taxon>Methanobacteriota</taxon>
        <taxon>Archaeoglobi</taxon>
        <taxon>Archaeoglobales</taxon>
        <taxon>Archaeoglobaceae</taxon>
        <taxon>Archaeoglobus</taxon>
    </lineage>
</organism>
<keyword id="KW-0002">3D-structure</keyword>
<keyword id="KW-0068">Autocatalytic cleavage</keyword>
<keyword id="KW-0963">Cytoplasm</keyword>
<keyword id="KW-0378">Hydrolase</keyword>
<keyword id="KW-0645">Protease</keyword>
<keyword id="KW-0647">Proteasome</keyword>
<keyword id="KW-1185">Reference proteome</keyword>
<keyword id="KW-0888">Threonine protease</keyword>
<keyword id="KW-0865">Zymogen</keyword>
<feature type="propeptide" id="PRO_0000026659" description="Removed in mature form; by autocatalysis" evidence="1">
    <location>
        <begin position="1"/>
        <end position="11"/>
    </location>
</feature>
<feature type="chain" id="PRO_0000026660" description="Proteasome subunit beta">
    <location>
        <begin position="12"/>
        <end position="213"/>
    </location>
</feature>
<feature type="active site" description="Nucleophile" evidence="1">
    <location>
        <position position="12"/>
    </location>
</feature>
<feature type="strand" evidence="3">
    <location>
        <begin position="14"/>
        <end position="19"/>
    </location>
</feature>
<feature type="strand" evidence="3">
    <location>
        <begin position="22"/>
        <end position="28"/>
    </location>
</feature>
<feature type="strand" evidence="3">
    <location>
        <begin position="31"/>
        <end position="33"/>
    </location>
</feature>
<feature type="strand" evidence="3">
    <location>
        <begin position="36"/>
        <end position="41"/>
    </location>
</feature>
<feature type="strand" evidence="3">
    <location>
        <begin position="45"/>
        <end position="49"/>
    </location>
</feature>
<feature type="strand" evidence="3">
    <location>
        <begin position="52"/>
        <end position="58"/>
    </location>
</feature>
<feature type="helix" evidence="3">
    <location>
        <begin position="60"/>
        <end position="81"/>
    </location>
</feature>
<feature type="helix" evidence="3">
    <location>
        <begin position="87"/>
        <end position="100"/>
    </location>
</feature>
<feature type="turn" evidence="3">
    <location>
        <begin position="101"/>
        <end position="103"/>
    </location>
</feature>
<feature type="strand" evidence="3">
    <location>
        <begin position="108"/>
        <end position="116"/>
    </location>
</feature>
<feature type="strand" evidence="3">
    <location>
        <begin position="119"/>
        <end position="125"/>
    </location>
</feature>
<feature type="strand" evidence="3">
    <location>
        <begin position="131"/>
        <end position="141"/>
    </location>
</feature>
<feature type="helix" evidence="3">
    <location>
        <begin position="144"/>
        <end position="154"/>
    </location>
</feature>
<feature type="helix" evidence="3">
    <location>
        <begin position="161"/>
        <end position="176"/>
    </location>
</feature>
<feature type="strand" evidence="3">
    <location>
        <begin position="186"/>
        <end position="191"/>
    </location>
</feature>
<feature type="strand" evidence="3">
    <location>
        <begin position="196"/>
        <end position="198"/>
    </location>
</feature>
<feature type="helix" evidence="3">
    <location>
        <begin position="200"/>
        <end position="207"/>
    </location>
</feature>
<feature type="helix" evidence="3">
    <location>
        <begin position="208"/>
        <end position="210"/>
    </location>
</feature>
<proteinExistence type="evidence at protein level"/>
<gene>
    <name evidence="1" type="primary">psmB</name>
    <name type="ordered locus">AF_0481</name>
</gene>
<name>PSB_ARCFU</name>
<sequence length="213" mass="23418">MSMIEEKIYKGTTTVGLVCKDGVVMATEKRATMGNFIASKAAKKIYQIADRMAMTTAGSVGDAQFLARIIKIEANLYEIRRERKPTVRAIATLTSNLLNSYRYFPYLVQLLIGGIDSEGKSIYSIDPIGGAIEEKDIVATGSGSLTAYGVLEDRFTPEIGVDEAVELAVRAIYSAMKRDSASGDGIDVVKITEDEFYQYSPEEVEQILAKFRK</sequence>
<comment type="function">
    <text evidence="1">Component of the proteasome core, a large protease complex with broad specificity involved in protein degradation.</text>
</comment>
<comment type="catalytic activity">
    <reaction evidence="1">
        <text>Cleavage of peptide bonds with very broad specificity.</text>
        <dbReference type="EC" id="3.4.25.1"/>
    </reaction>
</comment>
<comment type="activity regulation">
    <text evidence="1">The formation of the proteasomal ATPase PAN-20S proteasome complex, via the docking of the C-termini of PAN into the intersubunit pockets in the alpha-rings, triggers opening of the gate for substrate entry. Interconversion between the open-gate and close-gate conformations leads to a dynamic regulation of the 20S proteasome proteolysis activity.</text>
</comment>
<comment type="subunit">
    <text evidence="2">The 20S proteasome core is composed of 14 alpha and 14 beta subunits that assemble into four stacked heptameric rings, resulting in a barrel-shaped structure. The two inner rings, each composed of seven catalytic beta subunits, are sandwiched by two outer rings, each composed of seven alpha subunits. The catalytic chamber with the active sites is on the inside of the barrel. Has probably a gated structure, the ends of the cylinder being occluded by the N-termini of the alpha-subunits. Is likely capped at one or both ends by the proteasome regulatory ATPase, PAN.</text>
</comment>
<comment type="interaction">
    <interactant intactId="EBI-1035761">
        <id>Q9P996</id>
    </interactant>
    <interactant intactId="EBI-1035754">
        <id>O29760</id>
        <label>psmA</label>
    </interactant>
    <organismsDiffer>false</organismsDiffer>
    <experiments>2</experiments>
</comment>
<comment type="subcellular location">
    <subcellularLocation>
        <location evidence="1">Cytoplasm</location>
    </subcellularLocation>
</comment>
<comment type="similarity">
    <text evidence="1">Belongs to the peptidase T1B family.</text>
</comment>
<accession>Q9P996</accession>
<accession>O29769</accession>
<dbReference type="EC" id="3.4.25.1" evidence="1"/>
<dbReference type="EMBL" id="AE000782">
    <property type="protein sequence ID" value="AAB90757.1"/>
    <property type="molecule type" value="Genomic_DNA"/>
</dbReference>
<dbReference type="PIR" id="A69310">
    <property type="entry name" value="A69310"/>
</dbReference>
<dbReference type="PDB" id="1J2Q">
    <property type="method" value="X-ray"/>
    <property type="resolution" value="2.83 A"/>
    <property type="chains" value="H/I/J/K/L/M/N=12-213"/>
</dbReference>
<dbReference type="PDB" id="6HE5">
    <property type="method" value="EM"/>
    <property type="resolution" value="4.12 A"/>
    <property type="chains" value="1/2/3/4/5/6/7=11-213"/>
</dbReference>
<dbReference type="PDB" id="6HE7">
    <property type="method" value="EM"/>
    <property type="resolution" value="3.69 A"/>
    <property type="chains" value="1/2/3/4/5/6/7=12-213"/>
</dbReference>
<dbReference type="PDB" id="6HE8">
    <property type="method" value="EM"/>
    <property type="resolution" value="6.86 A"/>
    <property type="chains" value="1/2/3/4/5/6/7/h/i/j/k/l/m/n=12-213"/>
</dbReference>
<dbReference type="PDB" id="6HE9">
    <property type="method" value="EM"/>
    <property type="resolution" value="6.35 A"/>
    <property type="chains" value="1/2/3/4/5/6/7/h/i/j/k/l/m/n=12-213"/>
</dbReference>
<dbReference type="PDB" id="6HEA">
    <property type="method" value="EM"/>
    <property type="resolution" value="7.04 A"/>
    <property type="chains" value="1/2/3/4/5/6/7/h/i/j/k/l/m/n=12-213"/>
</dbReference>
<dbReference type="PDB" id="6HEC">
    <property type="method" value="EM"/>
    <property type="resolution" value="6.95 A"/>
    <property type="chains" value="1/2/3/4/5/6/7/h/i/j/k/l/m/n=12-213"/>
</dbReference>
<dbReference type="PDB" id="6HED">
    <property type="method" value="EM"/>
    <property type="resolution" value="6.95 A"/>
    <property type="chains" value="1/2/3/4/5/6/7/h/i/j/k/l/m/n=12-213"/>
</dbReference>
<dbReference type="PDBsum" id="1J2Q"/>
<dbReference type="PDBsum" id="6HE5"/>
<dbReference type="PDBsum" id="6HE7"/>
<dbReference type="PDBsum" id="6HE8"/>
<dbReference type="PDBsum" id="6HE9"/>
<dbReference type="PDBsum" id="6HEA"/>
<dbReference type="PDBsum" id="6HEC"/>
<dbReference type="PDBsum" id="6HED"/>
<dbReference type="EMDB" id="EMD-0210"/>
<dbReference type="EMDB" id="EMD-0211"/>
<dbReference type="EMDB" id="EMD-0212"/>
<dbReference type="EMDB" id="EMD-0213"/>
<dbReference type="EMDB" id="EMD-0214"/>
<dbReference type="EMDB" id="EMD-0215"/>
<dbReference type="EMDB" id="EMD-0216"/>
<dbReference type="SMR" id="Q9P996"/>
<dbReference type="IntAct" id="Q9P996">
    <property type="interactions" value="2"/>
</dbReference>
<dbReference type="STRING" id="224325.AF_0481"/>
<dbReference type="MEROPS" id="T01.002"/>
<dbReference type="PaxDb" id="224325-AF_0481"/>
<dbReference type="EnsemblBacteria" id="AAB90757">
    <property type="protein sequence ID" value="AAB90757"/>
    <property type="gene ID" value="AF_0481"/>
</dbReference>
<dbReference type="KEGG" id="afu:AF_0481"/>
<dbReference type="eggNOG" id="arCOG00970">
    <property type="taxonomic scope" value="Archaea"/>
</dbReference>
<dbReference type="HOGENOM" id="CLU_035750_7_2_2"/>
<dbReference type="OrthoDB" id="6330at2157"/>
<dbReference type="PhylomeDB" id="Q9P996"/>
<dbReference type="EvolutionaryTrace" id="Q9P996"/>
<dbReference type="Proteomes" id="UP000002199">
    <property type="component" value="Chromosome"/>
</dbReference>
<dbReference type="GO" id="GO:0005737">
    <property type="term" value="C:cytoplasm"/>
    <property type="evidence" value="ECO:0007669"/>
    <property type="project" value="UniProtKB-SubCell"/>
</dbReference>
<dbReference type="GO" id="GO:0019774">
    <property type="term" value="C:proteasome core complex, beta-subunit complex"/>
    <property type="evidence" value="ECO:0000250"/>
    <property type="project" value="UniProtKB"/>
</dbReference>
<dbReference type="GO" id="GO:0004298">
    <property type="term" value="F:threonine-type endopeptidase activity"/>
    <property type="evidence" value="ECO:0007669"/>
    <property type="project" value="UniProtKB-UniRule"/>
</dbReference>
<dbReference type="GO" id="GO:0010498">
    <property type="term" value="P:proteasomal protein catabolic process"/>
    <property type="evidence" value="ECO:0007669"/>
    <property type="project" value="UniProtKB-UniRule"/>
</dbReference>
<dbReference type="CDD" id="cd03764">
    <property type="entry name" value="proteasome_beta_archeal"/>
    <property type="match status" value="1"/>
</dbReference>
<dbReference type="FunFam" id="3.60.20.10:FF:000049">
    <property type="entry name" value="Proteasome subunit beta"/>
    <property type="match status" value="1"/>
</dbReference>
<dbReference type="Gene3D" id="3.60.20.10">
    <property type="entry name" value="Glutamine Phosphoribosylpyrophosphate, subunit 1, domain 1"/>
    <property type="match status" value="1"/>
</dbReference>
<dbReference type="HAMAP" id="MF_02113_A">
    <property type="entry name" value="Proteasome_B_A"/>
    <property type="match status" value="1"/>
</dbReference>
<dbReference type="InterPro" id="IPR029055">
    <property type="entry name" value="Ntn_hydrolases_N"/>
</dbReference>
<dbReference type="InterPro" id="IPR019983">
    <property type="entry name" value="Pept_T1A_Psome_bsu_arc"/>
</dbReference>
<dbReference type="InterPro" id="IPR000243">
    <property type="entry name" value="Pept_T1A_subB"/>
</dbReference>
<dbReference type="InterPro" id="IPR016050">
    <property type="entry name" value="Proteasome_bsu_CS"/>
</dbReference>
<dbReference type="InterPro" id="IPR001353">
    <property type="entry name" value="Proteasome_sua/b"/>
</dbReference>
<dbReference type="InterPro" id="IPR023333">
    <property type="entry name" value="Proteasome_suB-type"/>
</dbReference>
<dbReference type="NCBIfam" id="TIGR03634">
    <property type="entry name" value="arc_protsome_B"/>
    <property type="match status" value="1"/>
</dbReference>
<dbReference type="PANTHER" id="PTHR32194:SF0">
    <property type="entry name" value="ATP-DEPENDENT PROTEASE SUBUNIT HSLV"/>
    <property type="match status" value="1"/>
</dbReference>
<dbReference type="PANTHER" id="PTHR32194">
    <property type="entry name" value="METALLOPROTEASE TLDD"/>
    <property type="match status" value="1"/>
</dbReference>
<dbReference type="Pfam" id="PF00227">
    <property type="entry name" value="Proteasome"/>
    <property type="match status" value="1"/>
</dbReference>
<dbReference type="PRINTS" id="PR00141">
    <property type="entry name" value="PROTEASOME"/>
</dbReference>
<dbReference type="SUPFAM" id="SSF56235">
    <property type="entry name" value="N-terminal nucleophile aminohydrolases (Ntn hydrolases)"/>
    <property type="match status" value="1"/>
</dbReference>
<dbReference type="PROSITE" id="PS00854">
    <property type="entry name" value="PROTEASOME_BETA_1"/>
    <property type="match status" value="1"/>
</dbReference>
<dbReference type="PROSITE" id="PS51476">
    <property type="entry name" value="PROTEASOME_BETA_2"/>
    <property type="match status" value="1"/>
</dbReference>